<protein>
    <recommendedName>
        <fullName evidence="1">Large ribosomal subunit protein uL18</fullName>
    </recommendedName>
    <alternativeName>
        <fullName evidence="2">50S ribosomal protein L18</fullName>
    </alternativeName>
</protein>
<gene>
    <name evidence="1" type="primary">rplR</name>
    <name type="ordered locus">lpl0385</name>
</gene>
<comment type="function">
    <text evidence="1">This is one of the proteins that bind and probably mediate the attachment of the 5S RNA into the large ribosomal subunit, where it forms part of the central protuberance.</text>
</comment>
<comment type="subunit">
    <text evidence="1">Part of the 50S ribosomal subunit; part of the 5S rRNA/L5/L18/L25 subcomplex. Contacts the 5S and 23S rRNAs.</text>
</comment>
<comment type="similarity">
    <text evidence="1">Belongs to the universal ribosomal protein uL18 family.</text>
</comment>
<reference key="1">
    <citation type="journal article" date="2004" name="Nat. Genet.">
        <title>Evidence in the Legionella pneumophila genome for exploitation of host cell functions and high genome plasticity.</title>
        <authorList>
            <person name="Cazalet C."/>
            <person name="Rusniok C."/>
            <person name="Brueggemann H."/>
            <person name="Zidane N."/>
            <person name="Magnier A."/>
            <person name="Ma L."/>
            <person name="Tichit M."/>
            <person name="Jarraud S."/>
            <person name="Bouchier C."/>
            <person name="Vandenesch F."/>
            <person name="Kunst F."/>
            <person name="Etienne J."/>
            <person name="Glaser P."/>
            <person name="Buchrieser C."/>
        </authorList>
    </citation>
    <scope>NUCLEOTIDE SEQUENCE [LARGE SCALE GENOMIC DNA]</scope>
    <source>
        <strain>Lens</strain>
    </source>
</reference>
<organism>
    <name type="scientific">Legionella pneumophila (strain Lens)</name>
    <dbReference type="NCBI Taxonomy" id="297245"/>
    <lineage>
        <taxon>Bacteria</taxon>
        <taxon>Pseudomonadati</taxon>
        <taxon>Pseudomonadota</taxon>
        <taxon>Gammaproteobacteria</taxon>
        <taxon>Legionellales</taxon>
        <taxon>Legionellaceae</taxon>
        <taxon>Legionella</taxon>
    </lineage>
</organism>
<keyword id="KW-0687">Ribonucleoprotein</keyword>
<keyword id="KW-0689">Ribosomal protein</keyword>
<keyword id="KW-0694">RNA-binding</keyword>
<keyword id="KW-0699">rRNA-binding</keyword>
<proteinExistence type="inferred from homology"/>
<dbReference type="EMBL" id="CR628337">
    <property type="protein sequence ID" value="CAH14616.1"/>
    <property type="molecule type" value="Genomic_DNA"/>
</dbReference>
<dbReference type="RefSeq" id="WP_010946094.1">
    <property type="nucleotide sequence ID" value="NC_006369.1"/>
</dbReference>
<dbReference type="SMR" id="Q5WZJ6"/>
<dbReference type="GeneID" id="57034348"/>
<dbReference type="KEGG" id="lpf:lpl0385"/>
<dbReference type="LegioList" id="lpl0385"/>
<dbReference type="HOGENOM" id="CLU_098841_0_1_6"/>
<dbReference type="Proteomes" id="UP000002517">
    <property type="component" value="Chromosome"/>
</dbReference>
<dbReference type="GO" id="GO:0022625">
    <property type="term" value="C:cytosolic large ribosomal subunit"/>
    <property type="evidence" value="ECO:0007669"/>
    <property type="project" value="TreeGrafter"/>
</dbReference>
<dbReference type="GO" id="GO:0008097">
    <property type="term" value="F:5S rRNA binding"/>
    <property type="evidence" value="ECO:0007669"/>
    <property type="project" value="TreeGrafter"/>
</dbReference>
<dbReference type="GO" id="GO:0003735">
    <property type="term" value="F:structural constituent of ribosome"/>
    <property type="evidence" value="ECO:0007669"/>
    <property type="project" value="InterPro"/>
</dbReference>
<dbReference type="GO" id="GO:0006412">
    <property type="term" value="P:translation"/>
    <property type="evidence" value="ECO:0007669"/>
    <property type="project" value="UniProtKB-UniRule"/>
</dbReference>
<dbReference type="CDD" id="cd00432">
    <property type="entry name" value="Ribosomal_L18_L5e"/>
    <property type="match status" value="1"/>
</dbReference>
<dbReference type="FunFam" id="3.30.420.100:FF:000001">
    <property type="entry name" value="50S ribosomal protein L18"/>
    <property type="match status" value="1"/>
</dbReference>
<dbReference type="Gene3D" id="3.30.420.100">
    <property type="match status" value="1"/>
</dbReference>
<dbReference type="HAMAP" id="MF_01337_B">
    <property type="entry name" value="Ribosomal_uL18_B"/>
    <property type="match status" value="1"/>
</dbReference>
<dbReference type="InterPro" id="IPR004389">
    <property type="entry name" value="Ribosomal_uL18_bac-type"/>
</dbReference>
<dbReference type="InterPro" id="IPR005484">
    <property type="entry name" value="Ribosomal_uL18_bac/euk"/>
</dbReference>
<dbReference type="NCBIfam" id="TIGR00060">
    <property type="entry name" value="L18_bact"/>
    <property type="match status" value="1"/>
</dbReference>
<dbReference type="PANTHER" id="PTHR12899">
    <property type="entry name" value="39S RIBOSOMAL PROTEIN L18, MITOCHONDRIAL"/>
    <property type="match status" value="1"/>
</dbReference>
<dbReference type="PANTHER" id="PTHR12899:SF3">
    <property type="entry name" value="LARGE RIBOSOMAL SUBUNIT PROTEIN UL18M"/>
    <property type="match status" value="1"/>
</dbReference>
<dbReference type="Pfam" id="PF00861">
    <property type="entry name" value="Ribosomal_L18p"/>
    <property type="match status" value="1"/>
</dbReference>
<dbReference type="SUPFAM" id="SSF53137">
    <property type="entry name" value="Translational machinery components"/>
    <property type="match status" value="1"/>
</dbReference>
<feature type="chain" id="PRO_0000131283" description="Large ribosomal subunit protein uL18">
    <location>
        <begin position="1"/>
        <end position="119"/>
    </location>
</feature>
<name>RL18_LEGPL</name>
<evidence type="ECO:0000255" key="1">
    <source>
        <dbReference type="HAMAP-Rule" id="MF_01337"/>
    </source>
</evidence>
<evidence type="ECO:0000305" key="2"/>
<sequence>MNKQNARHRRGLKAKALIRKTGRSRLVVYRSGVHIYSQIVKSDQLGDKVLVASSTIDKELRSSLTGKSKVEQASLVGQLLGKRAKAAGITQVAFDRAGYKYHGRVKALAEGAREAGLDF</sequence>
<accession>Q5WZJ6</accession>